<accession>A8GVV5</accession>
<evidence type="ECO:0000255" key="1">
    <source>
        <dbReference type="HAMAP-Rule" id="MF_01008"/>
    </source>
</evidence>
<evidence type="ECO:0000255" key="2">
    <source>
        <dbReference type="PROSITE-ProRule" id="PRU01076"/>
    </source>
</evidence>
<proteinExistence type="inferred from homology"/>
<keyword id="KW-0963">Cytoplasm</keyword>
<keyword id="KW-0238">DNA-binding</keyword>
<keyword id="KW-0677">Repeat</keyword>
<keyword id="KW-0804">Transcription</keyword>
<keyword id="KW-0805">Transcription regulation</keyword>
<gene>
    <name evidence="1" type="primary">mraZ</name>
    <name type="ordered locus">A1I_03085</name>
</gene>
<protein>
    <recommendedName>
        <fullName>Transcriptional regulator MraZ</fullName>
    </recommendedName>
</protein>
<organism>
    <name type="scientific">Rickettsia bellii (strain OSU 85-389)</name>
    <dbReference type="NCBI Taxonomy" id="391896"/>
    <lineage>
        <taxon>Bacteria</taxon>
        <taxon>Pseudomonadati</taxon>
        <taxon>Pseudomonadota</taxon>
        <taxon>Alphaproteobacteria</taxon>
        <taxon>Rickettsiales</taxon>
        <taxon>Rickettsiaceae</taxon>
        <taxon>Rickettsieae</taxon>
        <taxon>Rickettsia</taxon>
        <taxon>belli group</taxon>
    </lineage>
</organism>
<name>MRAZ_RICB8</name>
<reference key="1">
    <citation type="submission" date="2007-09" db="EMBL/GenBank/DDBJ databases">
        <title>Complete genome sequencing of Rickettsia bellii.</title>
        <authorList>
            <person name="Madan A."/>
            <person name="Lee H."/>
            <person name="Madan A."/>
            <person name="Yoon J.-G."/>
            <person name="Ryu G.-Y."/>
            <person name="Dasch G."/>
            <person name="Ereemeva M."/>
        </authorList>
    </citation>
    <scope>NUCLEOTIDE SEQUENCE [LARGE SCALE GENOMIC DNA]</scope>
    <source>
        <strain>OSU 85-389</strain>
    </source>
</reference>
<feature type="chain" id="PRO_1000062921" description="Transcriptional regulator MraZ">
    <location>
        <begin position="1"/>
        <end position="150"/>
    </location>
</feature>
<feature type="domain" description="SpoVT-AbrB 1" evidence="2">
    <location>
        <begin position="8"/>
        <end position="55"/>
    </location>
</feature>
<feature type="domain" description="SpoVT-AbrB 2" evidence="2">
    <location>
        <begin position="84"/>
        <end position="127"/>
    </location>
</feature>
<sequence>MNIFLSKFINNNIDKKGRVSVPANYRAVLGKEAFNGIIAYPSIRNNCIEACGISHIEKLRQMIESLDPYSEERDAFETIIFGEAVQLSFDGEGRVILPASLMQHAGIEDQVCFVGKGVIFEIWQPQNFKDYLASAQKLAHEKRLTLRNTN</sequence>
<dbReference type="EMBL" id="CP000849">
    <property type="protein sequence ID" value="ABV78982.1"/>
    <property type="molecule type" value="Genomic_DNA"/>
</dbReference>
<dbReference type="RefSeq" id="WP_011477211.1">
    <property type="nucleotide sequence ID" value="NC_009883.1"/>
</dbReference>
<dbReference type="SMR" id="A8GVV5"/>
<dbReference type="KEGG" id="rbo:A1I_03085"/>
<dbReference type="HOGENOM" id="CLU_107907_1_0_5"/>
<dbReference type="GO" id="GO:0005737">
    <property type="term" value="C:cytoplasm"/>
    <property type="evidence" value="ECO:0007669"/>
    <property type="project" value="UniProtKB-UniRule"/>
</dbReference>
<dbReference type="GO" id="GO:0009295">
    <property type="term" value="C:nucleoid"/>
    <property type="evidence" value="ECO:0007669"/>
    <property type="project" value="UniProtKB-SubCell"/>
</dbReference>
<dbReference type="GO" id="GO:0003700">
    <property type="term" value="F:DNA-binding transcription factor activity"/>
    <property type="evidence" value="ECO:0007669"/>
    <property type="project" value="UniProtKB-UniRule"/>
</dbReference>
<dbReference type="GO" id="GO:0000976">
    <property type="term" value="F:transcription cis-regulatory region binding"/>
    <property type="evidence" value="ECO:0007669"/>
    <property type="project" value="TreeGrafter"/>
</dbReference>
<dbReference type="GO" id="GO:2000143">
    <property type="term" value="P:negative regulation of DNA-templated transcription initiation"/>
    <property type="evidence" value="ECO:0007669"/>
    <property type="project" value="TreeGrafter"/>
</dbReference>
<dbReference type="CDD" id="cd16321">
    <property type="entry name" value="MraZ_C"/>
    <property type="match status" value="1"/>
</dbReference>
<dbReference type="CDD" id="cd16320">
    <property type="entry name" value="MraZ_N"/>
    <property type="match status" value="1"/>
</dbReference>
<dbReference type="Gene3D" id="3.40.1550.20">
    <property type="entry name" value="Transcriptional regulator MraZ domain"/>
    <property type="match status" value="1"/>
</dbReference>
<dbReference type="HAMAP" id="MF_01008">
    <property type="entry name" value="MraZ"/>
    <property type="match status" value="1"/>
</dbReference>
<dbReference type="InterPro" id="IPR003444">
    <property type="entry name" value="MraZ"/>
</dbReference>
<dbReference type="InterPro" id="IPR035644">
    <property type="entry name" value="MraZ_C"/>
</dbReference>
<dbReference type="InterPro" id="IPR020603">
    <property type="entry name" value="MraZ_dom"/>
</dbReference>
<dbReference type="InterPro" id="IPR035642">
    <property type="entry name" value="MraZ_N"/>
</dbReference>
<dbReference type="InterPro" id="IPR038619">
    <property type="entry name" value="MraZ_sf"/>
</dbReference>
<dbReference type="InterPro" id="IPR007159">
    <property type="entry name" value="SpoVT-AbrB_dom"/>
</dbReference>
<dbReference type="InterPro" id="IPR037914">
    <property type="entry name" value="SpoVT-AbrB_sf"/>
</dbReference>
<dbReference type="NCBIfam" id="NF001475">
    <property type="entry name" value="PRK00326.2-1"/>
    <property type="match status" value="1"/>
</dbReference>
<dbReference type="PANTHER" id="PTHR34701">
    <property type="entry name" value="TRANSCRIPTIONAL REGULATOR MRAZ"/>
    <property type="match status" value="1"/>
</dbReference>
<dbReference type="PANTHER" id="PTHR34701:SF1">
    <property type="entry name" value="TRANSCRIPTIONAL REGULATOR MRAZ"/>
    <property type="match status" value="1"/>
</dbReference>
<dbReference type="Pfam" id="PF02381">
    <property type="entry name" value="MraZ"/>
    <property type="match status" value="1"/>
</dbReference>
<dbReference type="SUPFAM" id="SSF89447">
    <property type="entry name" value="AbrB/MazE/MraZ-like"/>
    <property type="match status" value="1"/>
</dbReference>
<dbReference type="PROSITE" id="PS51740">
    <property type="entry name" value="SPOVT_ABRB"/>
    <property type="match status" value="2"/>
</dbReference>
<comment type="subunit">
    <text evidence="1">Forms oligomers.</text>
</comment>
<comment type="subcellular location">
    <subcellularLocation>
        <location evidence="1">Cytoplasm</location>
        <location evidence="1">Nucleoid</location>
    </subcellularLocation>
</comment>
<comment type="similarity">
    <text evidence="1">Belongs to the MraZ family.</text>
</comment>